<name>PPDPF_RAT</name>
<accession>Q5PR01</accession>
<proteinExistence type="inferred from homology"/>
<comment type="function">
    <text evidence="1">Probable regulator of exocrine pancreas development.</text>
</comment>
<comment type="similarity">
    <text evidence="4">Belongs to the PPDPF family.</text>
</comment>
<dbReference type="EMBL" id="BC086948">
    <property type="protein sequence ID" value="AAH86948.1"/>
    <property type="molecule type" value="mRNA"/>
</dbReference>
<dbReference type="RefSeq" id="NP_001009316.1">
    <property type="nucleotide sequence ID" value="NM_001009316.2"/>
</dbReference>
<dbReference type="RefSeq" id="NP_001418478.1">
    <property type="nucleotide sequence ID" value="NM_001431549.1"/>
</dbReference>
<dbReference type="RefSeq" id="NP_001418479.1">
    <property type="nucleotide sequence ID" value="NM_001431550.1"/>
</dbReference>
<dbReference type="RefSeq" id="NP_001418480.1">
    <property type="nucleotide sequence ID" value="NM_001431551.1"/>
</dbReference>
<dbReference type="RefSeq" id="NP_001418481.1">
    <property type="nucleotide sequence ID" value="NM_001431552.1"/>
</dbReference>
<dbReference type="RefSeq" id="XP_006235808.1">
    <property type="nucleotide sequence ID" value="XM_006235746.3"/>
</dbReference>
<dbReference type="RefSeq" id="XP_006235810.1">
    <property type="nucleotide sequence ID" value="XM_006235748.3"/>
</dbReference>
<dbReference type="RefSeq" id="XP_017447110.1">
    <property type="nucleotide sequence ID" value="XM_017591621.1"/>
</dbReference>
<dbReference type="FunCoup" id="Q5PR01">
    <property type="interactions" value="279"/>
</dbReference>
<dbReference type="STRING" id="10116.ENSRNOP00000017319"/>
<dbReference type="PhosphoSitePlus" id="Q5PR01"/>
<dbReference type="PaxDb" id="10116-ENSRNOP00000017319"/>
<dbReference type="Ensembl" id="ENSRNOT00000017319.6">
    <property type="protein sequence ID" value="ENSRNOP00000017319.3"/>
    <property type="gene ID" value="ENSRNOG00000012722.6"/>
</dbReference>
<dbReference type="GeneID" id="296470"/>
<dbReference type="KEGG" id="rno:296470"/>
<dbReference type="UCSC" id="RGD:1310660">
    <property type="organism name" value="rat"/>
</dbReference>
<dbReference type="AGR" id="RGD:1310660"/>
<dbReference type="CTD" id="79144"/>
<dbReference type="RGD" id="1310660">
    <property type="gene designation" value="Ppdpf"/>
</dbReference>
<dbReference type="eggNOG" id="ENOG502S1KD">
    <property type="taxonomic scope" value="Eukaryota"/>
</dbReference>
<dbReference type="GeneTree" id="ENSGT00390000009113"/>
<dbReference type="HOGENOM" id="CLU_157362_0_0_1"/>
<dbReference type="InParanoid" id="Q5PR01"/>
<dbReference type="OMA" id="DSDHWWT"/>
<dbReference type="PhylomeDB" id="Q5PR01"/>
<dbReference type="TreeFam" id="TF333000"/>
<dbReference type="PRO" id="PR:Q5PR01"/>
<dbReference type="Proteomes" id="UP000002494">
    <property type="component" value="Chromosome 3"/>
</dbReference>
<dbReference type="Bgee" id="ENSRNOG00000012722">
    <property type="expression patterns" value="Expressed in liver and 20 other cell types or tissues"/>
</dbReference>
<dbReference type="GO" id="GO:0030154">
    <property type="term" value="P:cell differentiation"/>
    <property type="evidence" value="ECO:0007669"/>
    <property type="project" value="UniProtKB-KW"/>
</dbReference>
<dbReference type="GO" id="GO:0001889">
    <property type="term" value="P:liver development"/>
    <property type="evidence" value="ECO:0000266"/>
    <property type="project" value="RGD"/>
</dbReference>
<dbReference type="GO" id="GO:0031929">
    <property type="term" value="P:TOR signaling"/>
    <property type="evidence" value="ECO:0000266"/>
    <property type="project" value="RGD"/>
</dbReference>
<dbReference type="GO" id="GO:0038202">
    <property type="term" value="P:TORC1 signaling"/>
    <property type="evidence" value="ECO:0000266"/>
    <property type="project" value="RGD"/>
</dbReference>
<dbReference type="InterPro" id="IPR026754">
    <property type="entry name" value="PPDPF"/>
</dbReference>
<dbReference type="PANTHER" id="PTHR14572">
    <property type="entry name" value="PANCREATIC PROGENITOR CELL DIFFERENTIATION AND PROLIFERATION FACTOR"/>
    <property type="match status" value="1"/>
</dbReference>
<dbReference type="Pfam" id="PF15060">
    <property type="entry name" value="PPDFL"/>
    <property type="match status" value="1"/>
</dbReference>
<dbReference type="PRINTS" id="PR02071">
    <property type="entry name" value="PPDPFACTOR"/>
</dbReference>
<gene>
    <name type="primary">Ppdpf</name>
    <name type="synonym">Exdpf</name>
</gene>
<keyword id="KW-0217">Developmental protein</keyword>
<keyword id="KW-0221">Differentiation</keyword>
<keyword id="KW-0597">Phosphoprotein</keyword>
<keyword id="KW-1185">Reference proteome</keyword>
<reference key="1">
    <citation type="journal article" date="2004" name="Genome Res.">
        <title>The status, quality, and expansion of the NIH full-length cDNA project: the Mammalian Gene Collection (MGC).</title>
        <authorList>
            <consortium name="The MGC Project Team"/>
        </authorList>
    </citation>
    <scope>NUCLEOTIDE SEQUENCE [LARGE SCALE MRNA]</scope>
    <source>
        <tissue>Liver</tissue>
    </source>
</reference>
<feature type="chain" id="PRO_0000228100" description="Pancreatic progenitor cell differentiation and proliferation factor">
    <location>
        <begin position="1"/>
        <end position="115"/>
    </location>
</feature>
<feature type="region of interest" description="Disordered" evidence="3">
    <location>
        <begin position="20"/>
        <end position="46"/>
    </location>
</feature>
<feature type="region of interest" description="Disordered" evidence="3">
    <location>
        <begin position="74"/>
        <end position="115"/>
    </location>
</feature>
<feature type="compositionally biased region" description="Low complexity" evidence="3">
    <location>
        <begin position="22"/>
        <end position="32"/>
    </location>
</feature>
<feature type="compositionally biased region" description="Polar residues" evidence="3">
    <location>
        <begin position="106"/>
        <end position="115"/>
    </location>
</feature>
<feature type="modified residue" description="Phosphoserine" evidence="2">
    <location>
        <position position="9"/>
    </location>
</feature>
<organism>
    <name type="scientific">Rattus norvegicus</name>
    <name type="common">Rat</name>
    <dbReference type="NCBI Taxonomy" id="10116"/>
    <lineage>
        <taxon>Eukaryota</taxon>
        <taxon>Metazoa</taxon>
        <taxon>Chordata</taxon>
        <taxon>Craniata</taxon>
        <taxon>Vertebrata</taxon>
        <taxon>Euteleostomi</taxon>
        <taxon>Mammalia</taxon>
        <taxon>Eutheria</taxon>
        <taxon>Euarchontoglires</taxon>
        <taxon>Glires</taxon>
        <taxon>Rodentia</taxon>
        <taxon>Myomorpha</taxon>
        <taxon>Muroidea</taxon>
        <taxon>Muridae</taxon>
        <taxon>Murinae</taxon>
        <taxon>Rattus</taxon>
    </lineage>
</organism>
<evidence type="ECO:0000250" key="1"/>
<evidence type="ECO:0000250" key="2">
    <source>
        <dbReference type="UniProtKB" id="Q9H3Y8"/>
    </source>
</evidence>
<evidence type="ECO:0000256" key="3">
    <source>
        <dbReference type="SAM" id="MobiDB-lite"/>
    </source>
</evidence>
<evidence type="ECO:0000305" key="4"/>
<protein>
    <recommendedName>
        <fullName>Pancreatic progenitor cell differentiation and proliferation factor</fullName>
    </recommendedName>
    <alternativeName>
        <fullName>Exocrine differentiation and proliferation factor</fullName>
    </alternativeName>
</protein>
<sequence>MAAIPSSGSLVATHDYYRRRLGSSSSNSSGGSAEYPGDAVPHSPGLPKADSGHWWASFFFGKSTLPFMAAVLESPEHSAESPQASRSPISCGLAPETMKKQPVMHPSQTNSRAPS</sequence>